<accession>A9MP02</accession>
<organism>
    <name type="scientific">Salmonella arizonae (strain ATCC BAA-731 / CDC346-86 / RSK2980)</name>
    <dbReference type="NCBI Taxonomy" id="41514"/>
    <lineage>
        <taxon>Bacteria</taxon>
        <taxon>Pseudomonadati</taxon>
        <taxon>Pseudomonadota</taxon>
        <taxon>Gammaproteobacteria</taxon>
        <taxon>Enterobacterales</taxon>
        <taxon>Enterobacteriaceae</taxon>
        <taxon>Salmonella</taxon>
    </lineage>
</organism>
<feature type="chain" id="PRO_1000082662" description="RNase adapter protein RapZ">
    <location>
        <begin position="1"/>
        <end position="284"/>
    </location>
</feature>
<feature type="region of interest" description="RNA-binding" evidence="1">
    <location>
        <begin position="266"/>
        <end position="284"/>
    </location>
</feature>
<feature type="binding site" evidence="1">
    <location>
        <begin position="8"/>
        <end position="15"/>
    </location>
    <ligand>
        <name>ATP</name>
        <dbReference type="ChEBI" id="CHEBI:30616"/>
    </ligand>
</feature>
<feature type="binding site" evidence="1">
    <location>
        <begin position="56"/>
        <end position="59"/>
    </location>
    <ligand>
        <name>GTP</name>
        <dbReference type="ChEBI" id="CHEBI:37565"/>
    </ligand>
</feature>
<protein>
    <recommendedName>
        <fullName evidence="1">RNase adapter protein RapZ</fullName>
    </recommendedName>
</protein>
<name>RAPZ_SALAR</name>
<keyword id="KW-0067">ATP-binding</keyword>
<keyword id="KW-0342">GTP-binding</keyword>
<keyword id="KW-0547">Nucleotide-binding</keyword>
<keyword id="KW-1185">Reference proteome</keyword>
<keyword id="KW-0694">RNA-binding</keyword>
<sequence length="284" mass="32522">MVLMIVSGRSGSGKSVALRALEDMGFYCVDNLPVVLLPDLARTLADRQISAAVSIDVRNMPESPEIFEQAMNNLPDAFSPQLLFLDADRNTLIRRYSDTRRLHPLSSKNLSLESAIDKESDLLEPLRSRADLIVDTSEMSVHELAEMLRTRLLGKRERELTMVFESFGFKHGIPIDADYVFDVRFLPNPHWDPKLRPMTGLDKPVAAFLDRHTEVHNFIYQTRSYLELWLPMLETNNRSYLTVAIGCTGGKHRSVYIAEQLADYFRSRGKNVQSRHRTLEKRKT</sequence>
<dbReference type="EMBL" id="CP000880">
    <property type="protein sequence ID" value="ABX24084.1"/>
    <property type="molecule type" value="Genomic_DNA"/>
</dbReference>
<dbReference type="SMR" id="A9MP02"/>
<dbReference type="STRING" id="41514.SARI_04302"/>
<dbReference type="KEGG" id="ses:SARI_04302"/>
<dbReference type="HOGENOM" id="CLU_059558_1_1_6"/>
<dbReference type="Proteomes" id="UP000002084">
    <property type="component" value="Chromosome"/>
</dbReference>
<dbReference type="GO" id="GO:0005524">
    <property type="term" value="F:ATP binding"/>
    <property type="evidence" value="ECO:0007669"/>
    <property type="project" value="UniProtKB-UniRule"/>
</dbReference>
<dbReference type="GO" id="GO:0005525">
    <property type="term" value="F:GTP binding"/>
    <property type="evidence" value="ECO:0007669"/>
    <property type="project" value="UniProtKB-UniRule"/>
</dbReference>
<dbReference type="GO" id="GO:0003723">
    <property type="term" value="F:RNA binding"/>
    <property type="evidence" value="ECO:0007669"/>
    <property type="project" value="UniProtKB-KW"/>
</dbReference>
<dbReference type="Gene3D" id="3.40.50.300">
    <property type="entry name" value="P-loop containing nucleotide triphosphate hydrolases"/>
    <property type="match status" value="1"/>
</dbReference>
<dbReference type="HAMAP" id="MF_00636">
    <property type="entry name" value="RapZ_like"/>
    <property type="match status" value="1"/>
</dbReference>
<dbReference type="InterPro" id="IPR027417">
    <property type="entry name" value="P-loop_NTPase"/>
</dbReference>
<dbReference type="InterPro" id="IPR005337">
    <property type="entry name" value="RapZ-like"/>
</dbReference>
<dbReference type="InterPro" id="IPR053930">
    <property type="entry name" value="RapZ-like_N"/>
</dbReference>
<dbReference type="InterPro" id="IPR053931">
    <property type="entry name" value="RapZ_C"/>
</dbReference>
<dbReference type="NCBIfam" id="NF003828">
    <property type="entry name" value="PRK05416.1"/>
    <property type="match status" value="1"/>
</dbReference>
<dbReference type="PANTHER" id="PTHR30448">
    <property type="entry name" value="RNASE ADAPTER PROTEIN RAPZ"/>
    <property type="match status" value="1"/>
</dbReference>
<dbReference type="PANTHER" id="PTHR30448:SF0">
    <property type="entry name" value="RNASE ADAPTER PROTEIN RAPZ"/>
    <property type="match status" value="1"/>
</dbReference>
<dbReference type="Pfam" id="PF22740">
    <property type="entry name" value="PapZ_C"/>
    <property type="match status" value="1"/>
</dbReference>
<dbReference type="Pfam" id="PF03668">
    <property type="entry name" value="RapZ-like_N"/>
    <property type="match status" value="1"/>
</dbReference>
<dbReference type="PIRSF" id="PIRSF005052">
    <property type="entry name" value="P-loopkin"/>
    <property type="match status" value="1"/>
</dbReference>
<dbReference type="SUPFAM" id="SSF52540">
    <property type="entry name" value="P-loop containing nucleoside triphosphate hydrolases"/>
    <property type="match status" value="1"/>
</dbReference>
<gene>
    <name evidence="1" type="primary">rapZ</name>
    <name type="ordered locus">SARI_04302</name>
</gene>
<evidence type="ECO:0000255" key="1">
    <source>
        <dbReference type="HAMAP-Rule" id="MF_00636"/>
    </source>
</evidence>
<proteinExistence type="inferred from homology"/>
<comment type="function">
    <text evidence="1">Modulates the synthesis of GlmS, by affecting the processing and stability of the regulatory small RNA GlmZ. When glucosamine-6-phosphate (GlcN6P) concentrations are high in the cell, RapZ binds GlmZ and targets it to cleavage by RNase E. Consequently, GlmZ is inactivated and unable to activate GlmS synthesis. Under low GlcN6P concentrations, RapZ is sequestered and inactivated by an other regulatory small RNA, GlmY, preventing GlmZ degradation and leading to synthesis of GlmS.</text>
</comment>
<comment type="subunit">
    <text evidence="1">Homotrimer.</text>
</comment>
<comment type="similarity">
    <text evidence="1">Belongs to the RapZ-like family. RapZ subfamily.</text>
</comment>
<reference key="1">
    <citation type="submission" date="2007-11" db="EMBL/GenBank/DDBJ databases">
        <authorList>
            <consortium name="The Salmonella enterica serovar Arizonae Genome Sequencing Project"/>
            <person name="McClelland M."/>
            <person name="Sanderson E.K."/>
            <person name="Porwollik S."/>
            <person name="Spieth J."/>
            <person name="Clifton W.S."/>
            <person name="Fulton R."/>
            <person name="Chunyan W."/>
            <person name="Wollam A."/>
            <person name="Shah N."/>
            <person name="Pepin K."/>
            <person name="Bhonagiri V."/>
            <person name="Nash W."/>
            <person name="Johnson M."/>
            <person name="Thiruvilangam P."/>
            <person name="Wilson R."/>
        </authorList>
    </citation>
    <scope>NUCLEOTIDE SEQUENCE [LARGE SCALE GENOMIC DNA]</scope>
    <source>
        <strain>ATCC BAA-731 / CDC346-86 / RSK2980</strain>
    </source>
</reference>